<proteinExistence type="inferred from homology"/>
<name>RS14_SODGM</name>
<dbReference type="EMBL" id="AP008232">
    <property type="protein sequence ID" value="BAE75540.1"/>
    <property type="molecule type" value="Genomic_DNA"/>
</dbReference>
<dbReference type="RefSeq" id="WP_011412075.1">
    <property type="nucleotide sequence ID" value="NC_007712.1"/>
</dbReference>
<dbReference type="SMR" id="Q2NQN5"/>
<dbReference type="STRING" id="343509.SG2265"/>
<dbReference type="KEGG" id="sgl:SG2265"/>
<dbReference type="eggNOG" id="COG0199">
    <property type="taxonomic scope" value="Bacteria"/>
</dbReference>
<dbReference type="HOGENOM" id="CLU_139869_0_1_6"/>
<dbReference type="OrthoDB" id="9810484at2"/>
<dbReference type="BioCyc" id="SGLO343509:SGP1_RS20775-MONOMER"/>
<dbReference type="Proteomes" id="UP000001932">
    <property type="component" value="Chromosome"/>
</dbReference>
<dbReference type="GO" id="GO:0005737">
    <property type="term" value="C:cytoplasm"/>
    <property type="evidence" value="ECO:0007669"/>
    <property type="project" value="UniProtKB-ARBA"/>
</dbReference>
<dbReference type="GO" id="GO:0015935">
    <property type="term" value="C:small ribosomal subunit"/>
    <property type="evidence" value="ECO:0007669"/>
    <property type="project" value="TreeGrafter"/>
</dbReference>
<dbReference type="GO" id="GO:0019843">
    <property type="term" value="F:rRNA binding"/>
    <property type="evidence" value="ECO:0007669"/>
    <property type="project" value="UniProtKB-UniRule"/>
</dbReference>
<dbReference type="GO" id="GO:0003735">
    <property type="term" value="F:structural constituent of ribosome"/>
    <property type="evidence" value="ECO:0007669"/>
    <property type="project" value="InterPro"/>
</dbReference>
<dbReference type="GO" id="GO:0006412">
    <property type="term" value="P:translation"/>
    <property type="evidence" value="ECO:0007669"/>
    <property type="project" value="UniProtKB-UniRule"/>
</dbReference>
<dbReference type="FunFam" id="1.10.287.1480:FF:000001">
    <property type="entry name" value="30S ribosomal protein S14"/>
    <property type="match status" value="1"/>
</dbReference>
<dbReference type="Gene3D" id="1.10.287.1480">
    <property type="match status" value="1"/>
</dbReference>
<dbReference type="HAMAP" id="MF_00537">
    <property type="entry name" value="Ribosomal_uS14_1"/>
    <property type="match status" value="1"/>
</dbReference>
<dbReference type="InterPro" id="IPR001209">
    <property type="entry name" value="Ribosomal_uS14"/>
</dbReference>
<dbReference type="InterPro" id="IPR023036">
    <property type="entry name" value="Ribosomal_uS14_bac/plastid"/>
</dbReference>
<dbReference type="InterPro" id="IPR018271">
    <property type="entry name" value="Ribosomal_uS14_CS"/>
</dbReference>
<dbReference type="NCBIfam" id="NF006477">
    <property type="entry name" value="PRK08881.1"/>
    <property type="match status" value="1"/>
</dbReference>
<dbReference type="PANTHER" id="PTHR19836">
    <property type="entry name" value="30S RIBOSOMAL PROTEIN S14"/>
    <property type="match status" value="1"/>
</dbReference>
<dbReference type="PANTHER" id="PTHR19836:SF19">
    <property type="entry name" value="SMALL RIBOSOMAL SUBUNIT PROTEIN US14M"/>
    <property type="match status" value="1"/>
</dbReference>
<dbReference type="Pfam" id="PF00253">
    <property type="entry name" value="Ribosomal_S14"/>
    <property type="match status" value="1"/>
</dbReference>
<dbReference type="SUPFAM" id="SSF57716">
    <property type="entry name" value="Glucocorticoid receptor-like (DNA-binding domain)"/>
    <property type="match status" value="1"/>
</dbReference>
<dbReference type="PROSITE" id="PS00527">
    <property type="entry name" value="RIBOSOMAL_S14"/>
    <property type="match status" value="1"/>
</dbReference>
<reference key="1">
    <citation type="journal article" date="2006" name="Genome Res.">
        <title>Massive genome erosion and functional adaptations provide insights into the symbiotic lifestyle of Sodalis glossinidius in the tsetse host.</title>
        <authorList>
            <person name="Toh H."/>
            <person name="Weiss B.L."/>
            <person name="Perkin S.A.H."/>
            <person name="Yamashita A."/>
            <person name="Oshima K."/>
            <person name="Hattori M."/>
            <person name="Aksoy S."/>
        </authorList>
    </citation>
    <scope>NUCLEOTIDE SEQUENCE [LARGE SCALE GENOMIC DNA]</scope>
    <source>
        <strain>morsitans</strain>
    </source>
</reference>
<organism>
    <name type="scientific">Sodalis glossinidius (strain morsitans)</name>
    <dbReference type="NCBI Taxonomy" id="343509"/>
    <lineage>
        <taxon>Bacteria</taxon>
        <taxon>Pseudomonadati</taxon>
        <taxon>Pseudomonadota</taxon>
        <taxon>Gammaproteobacteria</taxon>
        <taxon>Enterobacterales</taxon>
        <taxon>Bruguierivoracaceae</taxon>
        <taxon>Sodalis</taxon>
    </lineage>
</organism>
<evidence type="ECO:0000255" key="1">
    <source>
        <dbReference type="HAMAP-Rule" id="MF_00537"/>
    </source>
</evidence>
<evidence type="ECO:0000305" key="2"/>
<gene>
    <name evidence="1" type="primary">rpsN</name>
    <name type="ordered locus">SG2265</name>
</gene>
<keyword id="KW-0687">Ribonucleoprotein</keyword>
<keyword id="KW-0689">Ribosomal protein</keyword>
<keyword id="KW-0694">RNA-binding</keyword>
<keyword id="KW-0699">rRNA-binding</keyword>
<feature type="chain" id="PRO_1000128595" description="Small ribosomal subunit protein uS14">
    <location>
        <begin position="1"/>
        <end position="101"/>
    </location>
</feature>
<protein>
    <recommendedName>
        <fullName evidence="1">Small ribosomal subunit protein uS14</fullName>
    </recommendedName>
    <alternativeName>
        <fullName evidence="2">30S ribosomal protein S14</fullName>
    </alternativeName>
</protein>
<comment type="function">
    <text evidence="1">Binds 16S rRNA, required for the assembly of 30S particles and may also be responsible for determining the conformation of the 16S rRNA at the A site.</text>
</comment>
<comment type="subunit">
    <text evidence="1">Part of the 30S ribosomal subunit. Contacts proteins S3 and S10.</text>
</comment>
<comment type="similarity">
    <text evidence="1">Belongs to the universal ribosomal protein uS14 family.</text>
</comment>
<sequence>MAKQSMKAREVKRVKLADKFFAKRAELKTIISDVNASDEDRWDAVLKLQTLPRDSSPSRQRNRCRQTGRPHAFLRKFGLSRIKVREAAMRGEIPGLRKASW</sequence>
<accession>Q2NQN5</accession>